<accession>A4SCF3</accession>
<organism>
    <name type="scientific">Chlorobium phaeovibrioides (strain DSM 265 / 1930)</name>
    <name type="common">Prosthecochloris vibrioformis (strain DSM 265)</name>
    <dbReference type="NCBI Taxonomy" id="290318"/>
    <lineage>
        <taxon>Bacteria</taxon>
        <taxon>Pseudomonadati</taxon>
        <taxon>Chlorobiota</taxon>
        <taxon>Chlorobiia</taxon>
        <taxon>Chlorobiales</taxon>
        <taxon>Chlorobiaceae</taxon>
        <taxon>Chlorobium/Pelodictyon group</taxon>
        <taxon>Chlorobium</taxon>
    </lineage>
</organism>
<proteinExistence type="inferred from homology"/>
<sequence>MRALSILGSTGSIGLSTLDVVRRHKESFSVVGLAEGHDVHALAEQIKEFRPTIVSVRDENAADELKTLLGPADRPEIVHGIEGAGTVAAAEGSDMVVSAIVGAAGLTPTIKAIKAGKDIALANKETLVVAGQLVSDLVKQNGVELLPVDSEHSAIFQSLLGHRAEDVERIILTASGGPFRNTPLEEMKKAGPEQALKHPQWTMGAKITIDSATMMNKGLEVIEAHWLFNMPADRIGVVVHPQSIVHSMVEYRDGCVIAQLGSPDMRAPIAYALSYPERSESGVKKLNLAEIGTLTFEEPDMVRFPALQLAFDALKAGKTYPAVLNAANEIAVAAFLNKQIGFTDIADTVDKTMQAHEAYTPMELDEYIHADRWARQTASTFISS</sequence>
<keyword id="KW-0414">Isoprene biosynthesis</keyword>
<keyword id="KW-0464">Manganese</keyword>
<keyword id="KW-0479">Metal-binding</keyword>
<keyword id="KW-0521">NADP</keyword>
<keyword id="KW-0560">Oxidoreductase</keyword>
<reference key="1">
    <citation type="submission" date="2007-03" db="EMBL/GenBank/DDBJ databases">
        <title>Complete sequence of Prosthecochloris vibrioformis DSM 265.</title>
        <authorList>
            <consortium name="US DOE Joint Genome Institute"/>
            <person name="Copeland A."/>
            <person name="Lucas S."/>
            <person name="Lapidus A."/>
            <person name="Barry K."/>
            <person name="Detter J.C."/>
            <person name="Glavina del Rio T."/>
            <person name="Hammon N."/>
            <person name="Israni S."/>
            <person name="Pitluck S."/>
            <person name="Schmutz J."/>
            <person name="Larimer F."/>
            <person name="Land M."/>
            <person name="Hauser L."/>
            <person name="Mikhailova N."/>
            <person name="Li T."/>
            <person name="Overmann J."/>
            <person name="Schuster S.C."/>
            <person name="Bryant D.A."/>
            <person name="Richardson P."/>
        </authorList>
    </citation>
    <scope>NUCLEOTIDE SEQUENCE [LARGE SCALE GENOMIC DNA]</scope>
    <source>
        <strain>DSM 265 / 1930</strain>
    </source>
</reference>
<feature type="chain" id="PRO_1000077340" description="1-deoxy-D-xylulose 5-phosphate reductoisomerase">
    <location>
        <begin position="1"/>
        <end position="384"/>
    </location>
</feature>
<feature type="binding site" evidence="1">
    <location>
        <position position="10"/>
    </location>
    <ligand>
        <name>NADPH</name>
        <dbReference type="ChEBI" id="CHEBI:57783"/>
    </ligand>
</feature>
<feature type="binding site" evidence="1">
    <location>
        <position position="11"/>
    </location>
    <ligand>
        <name>NADPH</name>
        <dbReference type="ChEBI" id="CHEBI:57783"/>
    </ligand>
</feature>
<feature type="binding site" evidence="1">
    <location>
        <position position="12"/>
    </location>
    <ligand>
        <name>NADPH</name>
        <dbReference type="ChEBI" id="CHEBI:57783"/>
    </ligand>
</feature>
<feature type="binding site" evidence="1">
    <location>
        <position position="13"/>
    </location>
    <ligand>
        <name>NADPH</name>
        <dbReference type="ChEBI" id="CHEBI:57783"/>
    </ligand>
</feature>
<feature type="binding site" evidence="1">
    <location>
        <position position="36"/>
    </location>
    <ligand>
        <name>NADPH</name>
        <dbReference type="ChEBI" id="CHEBI:57783"/>
    </ligand>
</feature>
<feature type="binding site" evidence="1">
    <location>
        <position position="123"/>
    </location>
    <ligand>
        <name>NADPH</name>
        <dbReference type="ChEBI" id="CHEBI:57783"/>
    </ligand>
</feature>
<feature type="binding site" evidence="1">
    <location>
        <position position="124"/>
    </location>
    <ligand>
        <name>1-deoxy-D-xylulose 5-phosphate</name>
        <dbReference type="ChEBI" id="CHEBI:57792"/>
    </ligand>
</feature>
<feature type="binding site" evidence="1">
    <location>
        <position position="125"/>
    </location>
    <ligand>
        <name>NADPH</name>
        <dbReference type="ChEBI" id="CHEBI:57783"/>
    </ligand>
</feature>
<feature type="binding site" evidence="1">
    <location>
        <position position="149"/>
    </location>
    <ligand>
        <name>Mn(2+)</name>
        <dbReference type="ChEBI" id="CHEBI:29035"/>
    </ligand>
</feature>
<feature type="binding site" evidence="1">
    <location>
        <position position="150"/>
    </location>
    <ligand>
        <name>1-deoxy-D-xylulose 5-phosphate</name>
        <dbReference type="ChEBI" id="CHEBI:57792"/>
    </ligand>
</feature>
<feature type="binding site" evidence="1">
    <location>
        <position position="151"/>
    </location>
    <ligand>
        <name>1-deoxy-D-xylulose 5-phosphate</name>
        <dbReference type="ChEBI" id="CHEBI:57792"/>
    </ligand>
</feature>
<feature type="binding site" evidence="1">
    <location>
        <position position="151"/>
    </location>
    <ligand>
        <name>Mn(2+)</name>
        <dbReference type="ChEBI" id="CHEBI:29035"/>
    </ligand>
</feature>
<feature type="binding site" evidence="1">
    <location>
        <position position="175"/>
    </location>
    <ligand>
        <name>1-deoxy-D-xylulose 5-phosphate</name>
        <dbReference type="ChEBI" id="CHEBI:57792"/>
    </ligand>
</feature>
<feature type="binding site" evidence="1">
    <location>
        <position position="198"/>
    </location>
    <ligand>
        <name>1-deoxy-D-xylulose 5-phosphate</name>
        <dbReference type="ChEBI" id="CHEBI:57792"/>
    </ligand>
</feature>
<feature type="binding site" evidence="1">
    <location>
        <position position="204"/>
    </location>
    <ligand>
        <name>NADPH</name>
        <dbReference type="ChEBI" id="CHEBI:57783"/>
    </ligand>
</feature>
<feature type="binding site" evidence="1">
    <location>
        <position position="211"/>
    </location>
    <ligand>
        <name>1-deoxy-D-xylulose 5-phosphate</name>
        <dbReference type="ChEBI" id="CHEBI:57792"/>
    </ligand>
</feature>
<feature type="binding site" evidence="1">
    <location>
        <position position="216"/>
    </location>
    <ligand>
        <name>1-deoxy-D-xylulose 5-phosphate</name>
        <dbReference type="ChEBI" id="CHEBI:57792"/>
    </ligand>
</feature>
<feature type="binding site" evidence="1">
    <location>
        <position position="217"/>
    </location>
    <ligand>
        <name>1-deoxy-D-xylulose 5-phosphate</name>
        <dbReference type="ChEBI" id="CHEBI:57792"/>
    </ligand>
</feature>
<feature type="binding site" evidence="1">
    <location>
        <position position="220"/>
    </location>
    <ligand>
        <name>1-deoxy-D-xylulose 5-phosphate</name>
        <dbReference type="ChEBI" id="CHEBI:57792"/>
    </ligand>
</feature>
<feature type="binding site" evidence="1">
    <location>
        <position position="220"/>
    </location>
    <ligand>
        <name>Mn(2+)</name>
        <dbReference type="ChEBI" id="CHEBI:29035"/>
    </ligand>
</feature>
<comment type="function">
    <text evidence="1">Catalyzes the NADPH-dependent rearrangement and reduction of 1-deoxy-D-xylulose-5-phosphate (DXP) to 2-C-methyl-D-erythritol 4-phosphate (MEP).</text>
</comment>
<comment type="catalytic activity">
    <reaction evidence="1">
        <text>2-C-methyl-D-erythritol 4-phosphate + NADP(+) = 1-deoxy-D-xylulose 5-phosphate + NADPH + H(+)</text>
        <dbReference type="Rhea" id="RHEA:13717"/>
        <dbReference type="ChEBI" id="CHEBI:15378"/>
        <dbReference type="ChEBI" id="CHEBI:57783"/>
        <dbReference type="ChEBI" id="CHEBI:57792"/>
        <dbReference type="ChEBI" id="CHEBI:58262"/>
        <dbReference type="ChEBI" id="CHEBI:58349"/>
        <dbReference type="EC" id="1.1.1.267"/>
    </reaction>
    <physiologicalReaction direction="right-to-left" evidence="1">
        <dbReference type="Rhea" id="RHEA:13719"/>
    </physiologicalReaction>
</comment>
<comment type="cofactor">
    <cofactor evidence="1">
        <name>Mg(2+)</name>
        <dbReference type="ChEBI" id="CHEBI:18420"/>
    </cofactor>
    <cofactor evidence="1">
        <name>Mn(2+)</name>
        <dbReference type="ChEBI" id="CHEBI:29035"/>
    </cofactor>
</comment>
<comment type="pathway">
    <text evidence="1">Isoprenoid biosynthesis; isopentenyl diphosphate biosynthesis via DXP pathway; isopentenyl diphosphate from 1-deoxy-D-xylulose 5-phosphate: step 1/6.</text>
</comment>
<comment type="similarity">
    <text evidence="1">Belongs to the DXR family.</text>
</comment>
<protein>
    <recommendedName>
        <fullName evidence="1">1-deoxy-D-xylulose 5-phosphate reductoisomerase</fullName>
        <shortName evidence="1">DXP reductoisomerase</shortName>
        <ecNumber evidence="1">1.1.1.267</ecNumber>
    </recommendedName>
    <alternativeName>
        <fullName evidence="1">1-deoxyxylulose-5-phosphate reductoisomerase</fullName>
    </alternativeName>
    <alternativeName>
        <fullName evidence="1">2-C-methyl-D-erythritol 4-phosphate synthase</fullName>
    </alternativeName>
</protein>
<gene>
    <name evidence="1" type="primary">dxr</name>
    <name type="ordered locus">Cvib_0138</name>
</gene>
<dbReference type="EC" id="1.1.1.267" evidence="1"/>
<dbReference type="EMBL" id="CP000607">
    <property type="protein sequence ID" value="ABP36162.1"/>
    <property type="molecule type" value="Genomic_DNA"/>
</dbReference>
<dbReference type="SMR" id="A4SCF3"/>
<dbReference type="STRING" id="290318.Cvib_0138"/>
<dbReference type="KEGG" id="pvi:Cvib_0138"/>
<dbReference type="eggNOG" id="COG0743">
    <property type="taxonomic scope" value="Bacteria"/>
</dbReference>
<dbReference type="HOGENOM" id="CLU_035714_4_0_10"/>
<dbReference type="OrthoDB" id="9806546at2"/>
<dbReference type="UniPathway" id="UPA00056">
    <property type="reaction ID" value="UER00092"/>
</dbReference>
<dbReference type="GO" id="GO:0030604">
    <property type="term" value="F:1-deoxy-D-xylulose-5-phosphate reductoisomerase activity"/>
    <property type="evidence" value="ECO:0007669"/>
    <property type="project" value="UniProtKB-UniRule"/>
</dbReference>
<dbReference type="GO" id="GO:0030145">
    <property type="term" value="F:manganese ion binding"/>
    <property type="evidence" value="ECO:0007669"/>
    <property type="project" value="TreeGrafter"/>
</dbReference>
<dbReference type="GO" id="GO:0070402">
    <property type="term" value="F:NADPH binding"/>
    <property type="evidence" value="ECO:0007669"/>
    <property type="project" value="InterPro"/>
</dbReference>
<dbReference type="GO" id="GO:0051484">
    <property type="term" value="P:isopentenyl diphosphate biosynthetic process, methylerythritol 4-phosphate pathway involved in terpenoid biosynthetic process"/>
    <property type="evidence" value="ECO:0007669"/>
    <property type="project" value="TreeGrafter"/>
</dbReference>
<dbReference type="FunFam" id="3.40.50.720:FF:000045">
    <property type="entry name" value="1-deoxy-D-xylulose 5-phosphate reductoisomerase"/>
    <property type="match status" value="1"/>
</dbReference>
<dbReference type="Gene3D" id="1.10.1740.10">
    <property type="match status" value="1"/>
</dbReference>
<dbReference type="Gene3D" id="3.40.50.720">
    <property type="entry name" value="NAD(P)-binding Rossmann-like Domain"/>
    <property type="match status" value="1"/>
</dbReference>
<dbReference type="HAMAP" id="MF_00183">
    <property type="entry name" value="DXP_reductoisom"/>
    <property type="match status" value="1"/>
</dbReference>
<dbReference type="InterPro" id="IPR003821">
    <property type="entry name" value="DXP_reductoisomerase"/>
</dbReference>
<dbReference type="InterPro" id="IPR013644">
    <property type="entry name" value="DXP_reductoisomerase_C"/>
</dbReference>
<dbReference type="InterPro" id="IPR013512">
    <property type="entry name" value="DXP_reductoisomerase_N"/>
</dbReference>
<dbReference type="InterPro" id="IPR026877">
    <property type="entry name" value="DXPR_C"/>
</dbReference>
<dbReference type="InterPro" id="IPR036169">
    <property type="entry name" value="DXPR_C_sf"/>
</dbReference>
<dbReference type="InterPro" id="IPR036291">
    <property type="entry name" value="NAD(P)-bd_dom_sf"/>
</dbReference>
<dbReference type="NCBIfam" id="TIGR00243">
    <property type="entry name" value="Dxr"/>
    <property type="match status" value="1"/>
</dbReference>
<dbReference type="NCBIfam" id="NF009114">
    <property type="entry name" value="PRK12464.1"/>
    <property type="match status" value="1"/>
</dbReference>
<dbReference type="PANTHER" id="PTHR30525">
    <property type="entry name" value="1-DEOXY-D-XYLULOSE 5-PHOSPHATE REDUCTOISOMERASE"/>
    <property type="match status" value="1"/>
</dbReference>
<dbReference type="PANTHER" id="PTHR30525:SF0">
    <property type="entry name" value="1-DEOXY-D-XYLULOSE 5-PHOSPHATE REDUCTOISOMERASE, CHLOROPLASTIC"/>
    <property type="match status" value="1"/>
</dbReference>
<dbReference type="Pfam" id="PF08436">
    <property type="entry name" value="DXP_redisom_C"/>
    <property type="match status" value="1"/>
</dbReference>
<dbReference type="Pfam" id="PF02670">
    <property type="entry name" value="DXP_reductoisom"/>
    <property type="match status" value="1"/>
</dbReference>
<dbReference type="Pfam" id="PF13288">
    <property type="entry name" value="DXPR_C"/>
    <property type="match status" value="1"/>
</dbReference>
<dbReference type="PIRSF" id="PIRSF006205">
    <property type="entry name" value="Dxp_reductismrs"/>
    <property type="match status" value="1"/>
</dbReference>
<dbReference type="SUPFAM" id="SSF69055">
    <property type="entry name" value="1-deoxy-D-xylulose-5-phosphate reductoisomerase, C-terminal domain"/>
    <property type="match status" value="1"/>
</dbReference>
<dbReference type="SUPFAM" id="SSF55347">
    <property type="entry name" value="Glyceraldehyde-3-phosphate dehydrogenase-like, C-terminal domain"/>
    <property type="match status" value="1"/>
</dbReference>
<dbReference type="SUPFAM" id="SSF51735">
    <property type="entry name" value="NAD(P)-binding Rossmann-fold domains"/>
    <property type="match status" value="1"/>
</dbReference>
<evidence type="ECO:0000255" key="1">
    <source>
        <dbReference type="HAMAP-Rule" id="MF_00183"/>
    </source>
</evidence>
<name>DXR_CHLPM</name>